<sequence>MSAIFEILDKDAGGRIGKLRTPHGVVETPTVMPVINPNIQLISPKEMRSFGAEILITNSYIIYRKEELRTVALEKGLHELLGFDGPIMTDSGSFQLSVYGSVEVTNEEILGFQEKIGSDIIVPLDIPTPPDVHFRRAEEELATTAERLEAARKFIQSKQLLAGPVQGSTYPELREKAASHLKDLNFEVYPLGAVVPLMESYRYAELVDVIAASKKGLSPTSPVHLFGAGHPMMFALAVALGCDLFDSAAYALYAKDGRYITSNGTYHLEKLNYLPCSCPVCSRYTAEELRKAKNKEELLGRHNLYATFAEIRLIKQSIKDGKLLELVEQRCRAHPKLLDGLKRLYTHSAWLEQFDPATKGTYFYCGPESASRPEVLRFGKRLERFSIEGSAIIRTSPVKGEKDYDRILTFKAPFGTFPAEMEEVYPFNAEVPKFPDYEALSTSLSNTIKLMDLNPGAEFTFICEKEFQHPLIEEIGKKAKLVYREAWKKE</sequence>
<feature type="chain" id="PRO_0000247875" description="tRNA-guanine(15) transglycosylase">
    <location>
        <begin position="1"/>
        <end position="490"/>
    </location>
</feature>
<feature type="active site" description="Nucleophile" evidence="1">
    <location>
        <position position="90"/>
    </location>
</feature>
<feature type="binding site" evidence="1">
    <location>
        <position position="125"/>
    </location>
    <ligand>
        <name>substrate</name>
    </ligand>
</feature>
<feature type="binding site" evidence="1">
    <location>
        <position position="193"/>
    </location>
    <ligand>
        <name>substrate</name>
    </ligand>
</feature>
<feature type="binding site" evidence="1">
    <location>
        <position position="276"/>
    </location>
    <ligand>
        <name>Zn(2+)</name>
        <dbReference type="ChEBI" id="CHEBI:29105"/>
    </ligand>
</feature>
<feature type="binding site" evidence="1">
    <location>
        <position position="278"/>
    </location>
    <ligand>
        <name>Zn(2+)</name>
        <dbReference type="ChEBI" id="CHEBI:29105"/>
    </ligand>
</feature>
<feature type="binding site" evidence="1">
    <location>
        <position position="281"/>
    </location>
    <ligand>
        <name>Zn(2+)</name>
        <dbReference type="ChEBI" id="CHEBI:29105"/>
    </ligand>
</feature>
<dbReference type="EC" id="2.4.2.48" evidence="1"/>
<dbReference type="EMBL" id="AE008384">
    <property type="protein sequence ID" value="AAM30797.1"/>
    <property type="molecule type" value="Genomic_DNA"/>
</dbReference>
<dbReference type="RefSeq" id="WP_011033050.1">
    <property type="nucleotide sequence ID" value="NC_003901.1"/>
</dbReference>
<dbReference type="SMR" id="Q8PXW5"/>
<dbReference type="GeneID" id="82160129"/>
<dbReference type="KEGG" id="mma:MM_1101"/>
<dbReference type="PATRIC" id="fig|192952.21.peg.1289"/>
<dbReference type="eggNOG" id="arCOG00989">
    <property type="taxonomic scope" value="Archaea"/>
</dbReference>
<dbReference type="HOGENOM" id="CLU_030083_0_0_2"/>
<dbReference type="UniPathway" id="UPA00393"/>
<dbReference type="Proteomes" id="UP000000595">
    <property type="component" value="Chromosome"/>
</dbReference>
<dbReference type="GO" id="GO:0005737">
    <property type="term" value="C:cytoplasm"/>
    <property type="evidence" value="ECO:0007669"/>
    <property type="project" value="TreeGrafter"/>
</dbReference>
<dbReference type="GO" id="GO:0016763">
    <property type="term" value="F:pentosyltransferase activity"/>
    <property type="evidence" value="ECO:0007669"/>
    <property type="project" value="UniProtKB-UniRule"/>
</dbReference>
<dbReference type="GO" id="GO:0008270">
    <property type="term" value="F:zinc ion binding"/>
    <property type="evidence" value="ECO:0007669"/>
    <property type="project" value="UniProtKB-UniRule"/>
</dbReference>
<dbReference type="GO" id="GO:0002099">
    <property type="term" value="P:tRNA wobble guanine modification"/>
    <property type="evidence" value="ECO:0007669"/>
    <property type="project" value="TreeGrafter"/>
</dbReference>
<dbReference type="Gene3D" id="3.20.20.105">
    <property type="entry name" value="Queuine tRNA-ribosyltransferase-like"/>
    <property type="match status" value="1"/>
</dbReference>
<dbReference type="HAMAP" id="MF_01634">
    <property type="entry name" value="TgtA_arch"/>
    <property type="match status" value="1"/>
</dbReference>
<dbReference type="InterPro" id="IPR050076">
    <property type="entry name" value="ArchSynthase1/Queuine_TRR"/>
</dbReference>
<dbReference type="InterPro" id="IPR036511">
    <property type="entry name" value="TGT-like_sf"/>
</dbReference>
<dbReference type="InterPro" id="IPR004804">
    <property type="entry name" value="TgtA"/>
</dbReference>
<dbReference type="InterPro" id="IPR002616">
    <property type="entry name" value="tRNA_ribo_trans-like"/>
</dbReference>
<dbReference type="NCBIfam" id="TIGR00432">
    <property type="entry name" value="arcsn_tRNA_tgt"/>
    <property type="match status" value="1"/>
</dbReference>
<dbReference type="NCBIfam" id="TIGR00449">
    <property type="entry name" value="tgt_general"/>
    <property type="match status" value="1"/>
</dbReference>
<dbReference type="PANTHER" id="PTHR46499">
    <property type="entry name" value="QUEUINE TRNA-RIBOSYLTRANSFERASE"/>
    <property type="match status" value="1"/>
</dbReference>
<dbReference type="PANTHER" id="PTHR46499:SF1">
    <property type="entry name" value="QUEUINE TRNA-RIBOSYLTRANSFERASE"/>
    <property type="match status" value="1"/>
</dbReference>
<dbReference type="Pfam" id="PF01702">
    <property type="entry name" value="TGT"/>
    <property type="match status" value="1"/>
</dbReference>
<dbReference type="SUPFAM" id="SSF88802">
    <property type="entry name" value="Pre-PUA domain"/>
    <property type="match status" value="1"/>
</dbReference>
<dbReference type="SUPFAM" id="SSF51713">
    <property type="entry name" value="tRNA-guanine transglycosylase"/>
    <property type="match status" value="1"/>
</dbReference>
<proteinExistence type="inferred from homology"/>
<accession>Q8PXW5</accession>
<organism>
    <name type="scientific">Methanosarcina mazei (strain ATCC BAA-159 / DSM 3647 / Goe1 / Go1 / JCM 11833 / OCM 88)</name>
    <name type="common">Methanosarcina frisia</name>
    <dbReference type="NCBI Taxonomy" id="192952"/>
    <lineage>
        <taxon>Archaea</taxon>
        <taxon>Methanobacteriati</taxon>
        <taxon>Methanobacteriota</taxon>
        <taxon>Stenosarchaea group</taxon>
        <taxon>Methanomicrobia</taxon>
        <taxon>Methanosarcinales</taxon>
        <taxon>Methanosarcinaceae</taxon>
        <taxon>Methanosarcina</taxon>
    </lineage>
</organism>
<evidence type="ECO:0000255" key="1">
    <source>
        <dbReference type="HAMAP-Rule" id="MF_01634"/>
    </source>
</evidence>
<reference key="1">
    <citation type="journal article" date="2002" name="J. Mol. Microbiol. Biotechnol.">
        <title>The genome of Methanosarcina mazei: evidence for lateral gene transfer between Bacteria and Archaea.</title>
        <authorList>
            <person name="Deppenmeier U."/>
            <person name="Johann A."/>
            <person name="Hartsch T."/>
            <person name="Merkl R."/>
            <person name="Schmitz R.A."/>
            <person name="Martinez-Arias R."/>
            <person name="Henne A."/>
            <person name="Wiezer A."/>
            <person name="Baeumer S."/>
            <person name="Jacobi C."/>
            <person name="Brueggemann H."/>
            <person name="Lienard T."/>
            <person name="Christmann A."/>
            <person name="Boemecke M."/>
            <person name="Steckel S."/>
            <person name="Bhattacharyya A."/>
            <person name="Lykidis A."/>
            <person name="Overbeek R."/>
            <person name="Klenk H.-P."/>
            <person name="Gunsalus R.P."/>
            <person name="Fritz H.-J."/>
            <person name="Gottschalk G."/>
        </authorList>
    </citation>
    <scope>NUCLEOTIDE SEQUENCE [LARGE SCALE GENOMIC DNA]</scope>
    <source>
        <strain>ATCC BAA-159 / DSM 3647 / Goe1 / Go1 / JCM 11833 / OCM 88</strain>
    </source>
</reference>
<name>ATGT_METMA</name>
<protein>
    <recommendedName>
        <fullName evidence="1">tRNA-guanine(15) transglycosylase</fullName>
        <ecNumber evidence="1">2.4.2.48</ecNumber>
    </recommendedName>
    <alternativeName>
        <fullName evidence="1">7-cyano-7-deazaguanine tRNA-ribosyltransferase</fullName>
    </alternativeName>
    <alternativeName>
        <fullName evidence="1">Archaeal tRNA-guanine transglycosylase</fullName>
    </alternativeName>
</protein>
<comment type="function">
    <text evidence="1">Exchanges the guanine residue with 7-cyano-7-deazaguanine (preQ0) at position 15 in the dihydrouridine loop (D-loop) of archaeal tRNAs.</text>
</comment>
<comment type="catalytic activity">
    <reaction evidence="1">
        <text>guanosine(15) in tRNA + 7-cyano-7-deazaguanine = 7-cyano-7-carbaguanosine(15) in tRNA + guanine</text>
        <dbReference type="Rhea" id="RHEA:43164"/>
        <dbReference type="Rhea" id="RHEA-COMP:10371"/>
        <dbReference type="Rhea" id="RHEA-COMP:10372"/>
        <dbReference type="ChEBI" id="CHEBI:16235"/>
        <dbReference type="ChEBI" id="CHEBI:45075"/>
        <dbReference type="ChEBI" id="CHEBI:74269"/>
        <dbReference type="ChEBI" id="CHEBI:82850"/>
        <dbReference type="EC" id="2.4.2.48"/>
    </reaction>
</comment>
<comment type="cofactor">
    <cofactor evidence="1">
        <name>Zn(2+)</name>
        <dbReference type="ChEBI" id="CHEBI:29105"/>
    </cofactor>
    <text evidence="1">Binds 1 zinc ion per subunit.</text>
</comment>
<comment type="pathway">
    <text evidence="1">tRNA modification; archaeosine-tRNA biosynthesis.</text>
</comment>
<comment type="similarity">
    <text evidence="1">Belongs to the archaeosine tRNA-ribosyltransferase family.</text>
</comment>
<keyword id="KW-0328">Glycosyltransferase</keyword>
<keyword id="KW-0479">Metal-binding</keyword>
<keyword id="KW-0808">Transferase</keyword>
<keyword id="KW-0819">tRNA processing</keyword>
<keyword id="KW-0862">Zinc</keyword>
<gene>
    <name evidence="1" type="primary">tgtA</name>
    <name type="ordered locus">MM_1101</name>
</gene>